<reference key="1">
    <citation type="journal article" date="1989" name="Proc. Natl. Acad. Sci. U.S.A.">
        <title>Sequence, tissue distribution, and differential expression of mRNA for a putative insulin-responsive glucose transporter in mouse 3T3-L1 adipocytes.</title>
        <authorList>
            <person name="Kaestner K.H."/>
            <person name="Christy R.J."/>
            <person name="McLenithan J.C."/>
            <person name="Braiterman L.T."/>
            <person name="Cornelius P."/>
            <person name="Pekala P.H."/>
            <person name="Lane M.D."/>
        </authorList>
    </citation>
    <scope>NUCLEOTIDE SEQUENCE [MRNA]</scope>
    <scope>TISSUE SPECIFICITY</scope>
</reference>
<reference key="2">
    <citation type="journal article" date="2000" name="Diabetologia">
        <title>Age-dependent changes in phenotypes and candidate gene analysis in a polygenic animal model of type II diabetes; NSY mouse.</title>
        <authorList>
            <person name="Ueda H."/>
            <person name="Ikegami H."/>
            <person name="Kawaguchi Y."/>
            <person name="Fujisawa T."/>
            <person name="Nojima K."/>
            <person name="Babaya N."/>
            <person name="Yamada K."/>
            <person name="Shibata M."/>
            <person name="Yamato E."/>
            <person name="Ogihara T."/>
        </authorList>
    </citation>
    <scope>NUCLEOTIDE SEQUENCE [MRNA]</scope>
    <source>
        <strain>C3H/HeJ</strain>
        <strain>NSY</strain>
        <tissue>Muscle</tissue>
    </source>
</reference>
<reference key="3">
    <citation type="submission" date="2005-01" db="EMBL/GenBank/DDBJ databases">
        <title>Characterization of quantitative trait loci influencing growth and adiposity using congenic mouse strains.</title>
        <authorList>
            <person name="Farber C.R."/>
            <person name="Corva P.M."/>
            <person name="Medrano J.F."/>
        </authorList>
    </citation>
    <scope>NUCLEOTIDE SEQUENCE [GENOMIC DNA]</scope>
    <source>
        <strain>CAST/EiJ</strain>
        <tissue>Brain</tissue>
    </source>
</reference>
<reference key="4">
    <citation type="journal article" date="2005" name="Science">
        <title>The transcriptional landscape of the mammalian genome.</title>
        <authorList>
            <person name="Carninci P."/>
            <person name="Kasukawa T."/>
            <person name="Katayama S."/>
            <person name="Gough J."/>
            <person name="Frith M.C."/>
            <person name="Maeda N."/>
            <person name="Oyama R."/>
            <person name="Ravasi T."/>
            <person name="Lenhard B."/>
            <person name="Wells C."/>
            <person name="Kodzius R."/>
            <person name="Shimokawa K."/>
            <person name="Bajic V.B."/>
            <person name="Brenner S.E."/>
            <person name="Batalov S."/>
            <person name="Forrest A.R."/>
            <person name="Zavolan M."/>
            <person name="Davis M.J."/>
            <person name="Wilming L.G."/>
            <person name="Aidinis V."/>
            <person name="Allen J.E."/>
            <person name="Ambesi-Impiombato A."/>
            <person name="Apweiler R."/>
            <person name="Aturaliya R.N."/>
            <person name="Bailey T.L."/>
            <person name="Bansal M."/>
            <person name="Baxter L."/>
            <person name="Beisel K.W."/>
            <person name="Bersano T."/>
            <person name="Bono H."/>
            <person name="Chalk A.M."/>
            <person name="Chiu K.P."/>
            <person name="Choudhary V."/>
            <person name="Christoffels A."/>
            <person name="Clutterbuck D.R."/>
            <person name="Crowe M.L."/>
            <person name="Dalla E."/>
            <person name="Dalrymple B.P."/>
            <person name="de Bono B."/>
            <person name="Della Gatta G."/>
            <person name="di Bernardo D."/>
            <person name="Down T."/>
            <person name="Engstrom P."/>
            <person name="Fagiolini M."/>
            <person name="Faulkner G."/>
            <person name="Fletcher C.F."/>
            <person name="Fukushima T."/>
            <person name="Furuno M."/>
            <person name="Futaki S."/>
            <person name="Gariboldi M."/>
            <person name="Georgii-Hemming P."/>
            <person name="Gingeras T.R."/>
            <person name="Gojobori T."/>
            <person name="Green R.E."/>
            <person name="Gustincich S."/>
            <person name="Harbers M."/>
            <person name="Hayashi Y."/>
            <person name="Hensch T.K."/>
            <person name="Hirokawa N."/>
            <person name="Hill D."/>
            <person name="Huminiecki L."/>
            <person name="Iacono M."/>
            <person name="Ikeo K."/>
            <person name="Iwama A."/>
            <person name="Ishikawa T."/>
            <person name="Jakt M."/>
            <person name="Kanapin A."/>
            <person name="Katoh M."/>
            <person name="Kawasawa Y."/>
            <person name="Kelso J."/>
            <person name="Kitamura H."/>
            <person name="Kitano H."/>
            <person name="Kollias G."/>
            <person name="Krishnan S.P."/>
            <person name="Kruger A."/>
            <person name="Kummerfeld S.K."/>
            <person name="Kurochkin I.V."/>
            <person name="Lareau L.F."/>
            <person name="Lazarevic D."/>
            <person name="Lipovich L."/>
            <person name="Liu J."/>
            <person name="Liuni S."/>
            <person name="McWilliam S."/>
            <person name="Madan Babu M."/>
            <person name="Madera M."/>
            <person name="Marchionni L."/>
            <person name="Matsuda H."/>
            <person name="Matsuzawa S."/>
            <person name="Miki H."/>
            <person name="Mignone F."/>
            <person name="Miyake S."/>
            <person name="Morris K."/>
            <person name="Mottagui-Tabar S."/>
            <person name="Mulder N."/>
            <person name="Nakano N."/>
            <person name="Nakauchi H."/>
            <person name="Ng P."/>
            <person name="Nilsson R."/>
            <person name="Nishiguchi S."/>
            <person name="Nishikawa S."/>
            <person name="Nori F."/>
            <person name="Ohara O."/>
            <person name="Okazaki Y."/>
            <person name="Orlando V."/>
            <person name="Pang K.C."/>
            <person name="Pavan W.J."/>
            <person name="Pavesi G."/>
            <person name="Pesole G."/>
            <person name="Petrovsky N."/>
            <person name="Piazza S."/>
            <person name="Reed J."/>
            <person name="Reid J.F."/>
            <person name="Ring B.Z."/>
            <person name="Ringwald M."/>
            <person name="Rost B."/>
            <person name="Ruan Y."/>
            <person name="Salzberg S.L."/>
            <person name="Sandelin A."/>
            <person name="Schneider C."/>
            <person name="Schoenbach C."/>
            <person name="Sekiguchi K."/>
            <person name="Semple C.A."/>
            <person name="Seno S."/>
            <person name="Sessa L."/>
            <person name="Sheng Y."/>
            <person name="Shibata Y."/>
            <person name="Shimada H."/>
            <person name="Shimada K."/>
            <person name="Silva D."/>
            <person name="Sinclair B."/>
            <person name="Sperling S."/>
            <person name="Stupka E."/>
            <person name="Sugiura K."/>
            <person name="Sultana R."/>
            <person name="Takenaka Y."/>
            <person name="Taki K."/>
            <person name="Tammoja K."/>
            <person name="Tan S.L."/>
            <person name="Tang S."/>
            <person name="Taylor M.S."/>
            <person name="Tegner J."/>
            <person name="Teichmann S.A."/>
            <person name="Ueda H.R."/>
            <person name="van Nimwegen E."/>
            <person name="Verardo R."/>
            <person name="Wei C.L."/>
            <person name="Yagi K."/>
            <person name="Yamanishi H."/>
            <person name="Zabarovsky E."/>
            <person name="Zhu S."/>
            <person name="Zimmer A."/>
            <person name="Hide W."/>
            <person name="Bult C."/>
            <person name="Grimmond S.M."/>
            <person name="Teasdale R.D."/>
            <person name="Liu E.T."/>
            <person name="Brusic V."/>
            <person name="Quackenbush J."/>
            <person name="Wahlestedt C."/>
            <person name="Mattick J.S."/>
            <person name="Hume D.A."/>
            <person name="Kai C."/>
            <person name="Sasaki D."/>
            <person name="Tomaru Y."/>
            <person name="Fukuda S."/>
            <person name="Kanamori-Katayama M."/>
            <person name="Suzuki M."/>
            <person name="Aoki J."/>
            <person name="Arakawa T."/>
            <person name="Iida J."/>
            <person name="Imamura K."/>
            <person name="Itoh M."/>
            <person name="Kato T."/>
            <person name="Kawaji H."/>
            <person name="Kawagashira N."/>
            <person name="Kawashima T."/>
            <person name="Kojima M."/>
            <person name="Kondo S."/>
            <person name="Konno H."/>
            <person name="Nakano K."/>
            <person name="Ninomiya N."/>
            <person name="Nishio T."/>
            <person name="Okada M."/>
            <person name="Plessy C."/>
            <person name="Shibata K."/>
            <person name="Shiraki T."/>
            <person name="Suzuki S."/>
            <person name="Tagami M."/>
            <person name="Waki K."/>
            <person name="Watahiki A."/>
            <person name="Okamura-Oho Y."/>
            <person name="Suzuki H."/>
            <person name="Kawai J."/>
            <person name="Hayashizaki Y."/>
        </authorList>
    </citation>
    <scope>NUCLEOTIDE SEQUENCE [LARGE SCALE MRNA]</scope>
    <source>
        <strain>C57BL/6J</strain>
        <tissue>Bone</tissue>
        <tissue>Spinal ganglion</tissue>
    </source>
</reference>
<reference key="5">
    <citation type="journal article" date="2009" name="PLoS Biol.">
        <title>Lineage-specific biology revealed by a finished genome assembly of the mouse.</title>
        <authorList>
            <person name="Church D.M."/>
            <person name="Goodstadt L."/>
            <person name="Hillier L.W."/>
            <person name="Zody M.C."/>
            <person name="Goldstein S."/>
            <person name="She X."/>
            <person name="Bult C.J."/>
            <person name="Agarwala R."/>
            <person name="Cherry J.L."/>
            <person name="DiCuccio M."/>
            <person name="Hlavina W."/>
            <person name="Kapustin Y."/>
            <person name="Meric P."/>
            <person name="Maglott D."/>
            <person name="Birtle Z."/>
            <person name="Marques A.C."/>
            <person name="Graves T."/>
            <person name="Zhou S."/>
            <person name="Teague B."/>
            <person name="Potamousis K."/>
            <person name="Churas C."/>
            <person name="Place M."/>
            <person name="Herschleb J."/>
            <person name="Runnheim R."/>
            <person name="Forrest D."/>
            <person name="Amos-Landgraf J."/>
            <person name="Schwartz D.C."/>
            <person name="Cheng Z."/>
            <person name="Lindblad-Toh K."/>
            <person name="Eichler E.E."/>
            <person name="Ponting C.P."/>
        </authorList>
    </citation>
    <scope>NUCLEOTIDE SEQUENCE [LARGE SCALE GENOMIC DNA]</scope>
    <source>
        <strain>C57BL/6J</strain>
    </source>
</reference>
<reference key="6">
    <citation type="submission" date="2005-07" db="EMBL/GenBank/DDBJ databases">
        <authorList>
            <person name="Mural R.J."/>
            <person name="Adams M.D."/>
            <person name="Myers E.W."/>
            <person name="Smith H.O."/>
            <person name="Venter J.C."/>
        </authorList>
    </citation>
    <scope>NUCLEOTIDE SEQUENCE [LARGE SCALE GENOMIC DNA]</scope>
</reference>
<reference key="7">
    <citation type="journal article" date="2004" name="Genome Res.">
        <title>The status, quality, and expansion of the NIH full-length cDNA project: the Mammalian Gene Collection (MGC).</title>
        <authorList>
            <consortium name="The MGC Project Team"/>
        </authorList>
    </citation>
    <scope>NUCLEOTIDE SEQUENCE [LARGE SCALE MRNA]</scope>
    <source>
        <tissue>Colon</tissue>
    </source>
</reference>
<reference key="8">
    <citation type="journal article" date="2003" name="J. Biol. Chem.">
        <title>Insulin-stimulated phosphorylation of a Rab GTPase-activating protein regulates GLUT4 translocation.</title>
        <authorList>
            <person name="Sano H."/>
            <person name="Kane S."/>
            <person name="Sano E."/>
            <person name="Miinea C.P."/>
            <person name="Asara J.M."/>
            <person name="Lane W.S."/>
            <person name="Garner C.W."/>
            <person name="Lienhard G.E."/>
        </authorList>
    </citation>
    <scope>EFFECT OF TBC1D4 ON GLUT4 TRANSLOCATION</scope>
</reference>
<reference key="9">
    <citation type="journal article" date="2009" name="Nat. Biotechnol.">
        <title>Mass-spectrometric identification and relative quantification of N-linked cell surface glycoproteins.</title>
        <authorList>
            <person name="Wollscheid B."/>
            <person name="Bausch-Fluck D."/>
            <person name="Henderson C."/>
            <person name="O'Brien R."/>
            <person name="Bibel M."/>
            <person name="Schiess R."/>
            <person name="Aebersold R."/>
            <person name="Watts J.D."/>
        </authorList>
    </citation>
    <scope>GLYCOSYLATION [LARGE SCALE ANALYSIS] AT ASN-57</scope>
</reference>
<reference key="10">
    <citation type="journal article" date="2010" name="Cell">
        <title>A tissue-specific atlas of mouse protein phosphorylation and expression.</title>
        <authorList>
            <person name="Huttlin E.L."/>
            <person name="Jedrychowski M.P."/>
            <person name="Elias J.E."/>
            <person name="Goswami T."/>
            <person name="Rad R."/>
            <person name="Beausoleil S.A."/>
            <person name="Villen J."/>
            <person name="Haas W."/>
            <person name="Sowa M.E."/>
            <person name="Gygi S.P."/>
        </authorList>
    </citation>
    <scope>PHOSPHORYLATION [LARGE SCALE ANALYSIS] AT THR-486 AND SER-488</scope>
    <scope>IDENTIFICATION BY MASS SPECTROMETRY [LARGE SCALE ANALYSIS]</scope>
    <source>
        <tissue>Brown adipose tissue</tissue>
        <tissue>Heart</tissue>
        <tissue>Kidney</tissue>
        <tissue>Liver</tissue>
        <tissue>Lung</tissue>
        <tissue>Spleen</tissue>
    </source>
</reference>
<reference key="11">
    <citation type="journal article" date="2011" name="Cell Metab.">
        <title>C2 domain-containing phosphoprotein CDP138 regulates GLUT4 insertion into the plasma membrane.</title>
        <authorList>
            <person name="Xie X."/>
            <person name="Gong Z."/>
            <person name="Mansuy-Aubert V."/>
            <person name="Zhou Q.L."/>
            <person name="Tatulian S.A."/>
            <person name="Sehrt D."/>
            <person name="Gnad F."/>
            <person name="Brill L.M."/>
            <person name="Motamedchaboki K."/>
            <person name="Chen Y."/>
            <person name="Czech M.P."/>
            <person name="Mann M."/>
            <person name="Kruger M."/>
            <person name="Jiang Z.Y."/>
        </authorList>
    </citation>
    <scope>SUBCELLULAR LOCATION</scope>
</reference>
<reference key="12">
    <citation type="journal article" date="2015" name="J. Biol. Chem.">
        <title>Tumor necrosis factor (TNF)-alpha-induced repression of GKAP42 protein levels through cGMP-dependent kinase (cGK)-Ialpha causes insulin resistance in 3T3-L1 adipocytes.</title>
        <authorList>
            <person name="Ando Y."/>
            <person name="Shinozawa Y."/>
            <person name="Iijima Y."/>
            <person name="Yu B.C."/>
            <person name="Sone M."/>
            <person name="Ooi Y."/>
            <person name="Watanaka Y."/>
            <person name="Chida K."/>
            <person name="Hakuno F."/>
            <person name="Takahashi S."/>
        </authorList>
    </citation>
    <scope>SUBCELLULAR LOCATION</scope>
</reference>
<reference key="13">
    <citation type="journal article" date="2015" name="J. Biol. Chem.">
        <title>Proteomic Analysis of GLUT4 Storage Vesicles Reveals Tumor Suppressor Candidate 5 (TUSC5) as a Novel Regulator of Insulin Action in Adipocytes.</title>
        <authorList>
            <person name="Fazakerley D.J."/>
            <person name="Naghiloo S."/>
            <person name="Chaudhuri R."/>
            <person name="Koumanov F."/>
            <person name="Burchfield J.G."/>
            <person name="Thomas K.C."/>
            <person name="Krycer J.R."/>
            <person name="Prior M.J."/>
            <person name="Parker B.L."/>
            <person name="Murrow B.A."/>
            <person name="Stoeckli J."/>
            <person name="Meoli C.C."/>
            <person name="Holman G.D."/>
            <person name="James D.E."/>
        </authorList>
    </citation>
    <scope>TISSUE SPECIFICITY</scope>
    <scope>SUBCELLULAR LOCATION</scope>
    <scope>FUNCTION</scope>
</reference>
<reference key="14">
    <citation type="journal article" date="2015" name="Mol. Metab.">
        <title>TUSC5 regulates insulin-mediated adipose tissue glucose uptake by modulation of GLUT4 recycling.</title>
        <authorList>
            <person name="Beaton N."/>
            <person name="Rudigier C."/>
            <person name="Moest H."/>
            <person name="Mueller S."/>
            <person name="Mrosek N."/>
            <person name="Roeder E."/>
            <person name="Rudofsky G."/>
            <person name="Ruelicke T."/>
            <person name="Ukropec J."/>
            <person name="Ukropcova B."/>
            <person name="Augustin R."/>
            <person name="Neubauer H."/>
            <person name="Wolfrum C."/>
        </authorList>
    </citation>
    <scope>SUBCELLULAR LOCATION</scope>
    <scope>TISSUE SPECIFICITY</scope>
    <scope>INTERACTION WITH TRARG1</scope>
    <scope>FUNCTION</scope>
</reference>
<reference key="15">
    <citation type="journal article" date="2016" name="J. Cell Biol.">
        <title>SEC16A is a RAB10 effector required for insulin-stimulated GLUT4 trafficking in adipocytes.</title>
        <authorList>
            <person name="Bruno J."/>
            <person name="Brumfield A."/>
            <person name="Chaudhary N."/>
            <person name="Iaea D."/>
            <person name="McGraw T.E."/>
        </authorList>
    </citation>
    <scope>SUBCELLULAR LOCATION</scope>
</reference>
<reference key="16">
    <citation type="journal article" date="2016" name="Sci. Rep.">
        <title>A novel IRS-1-associated protein, DGKzeta regulates GLUT4 translocation in 3T3-L1 adipocytes.</title>
        <authorList>
            <person name="Liu T."/>
            <person name="Yu B."/>
            <person name="Kakino M."/>
            <person name="Fujimoto H."/>
            <person name="Ando Y."/>
            <person name="Hakuno F."/>
            <person name="Takahashi S.I."/>
        </authorList>
    </citation>
    <scope>SUBCELLULAR LOCATION</scope>
</reference>
<keyword id="KW-1003">Cell membrane</keyword>
<keyword id="KW-0963">Cytoplasm</keyword>
<keyword id="KW-0219">Diabetes mellitus</keyword>
<keyword id="KW-0325">Glycoprotein</keyword>
<keyword id="KW-0449">Lipoprotein</keyword>
<keyword id="KW-0472">Membrane</keyword>
<keyword id="KW-0564">Palmitate</keyword>
<keyword id="KW-0597">Phosphoprotein</keyword>
<keyword id="KW-1185">Reference proteome</keyword>
<keyword id="KW-0762">Sugar transport</keyword>
<keyword id="KW-0812">Transmembrane</keyword>
<keyword id="KW-1133">Transmembrane helix</keyword>
<keyword id="KW-0813">Transport</keyword>
<keyword id="KW-0832">Ubl conjugation</keyword>
<name>GLUT4_MOUSE</name>
<organism>
    <name type="scientific">Mus musculus</name>
    <name type="common">Mouse</name>
    <dbReference type="NCBI Taxonomy" id="10090"/>
    <lineage>
        <taxon>Eukaryota</taxon>
        <taxon>Metazoa</taxon>
        <taxon>Chordata</taxon>
        <taxon>Craniata</taxon>
        <taxon>Vertebrata</taxon>
        <taxon>Euteleostomi</taxon>
        <taxon>Mammalia</taxon>
        <taxon>Eutheria</taxon>
        <taxon>Euarchontoglires</taxon>
        <taxon>Glires</taxon>
        <taxon>Rodentia</taxon>
        <taxon>Myomorpha</taxon>
        <taxon>Muroidea</taxon>
        <taxon>Muridae</taxon>
        <taxon>Murinae</taxon>
        <taxon>Mus</taxon>
        <taxon>Mus</taxon>
    </lineage>
</organism>
<protein>
    <recommendedName>
        <fullName evidence="16">Solute carrier family 2, facilitated glucose transporter member 4</fullName>
    </recommendedName>
    <alternativeName>
        <fullName evidence="15">GT2</fullName>
    </alternativeName>
    <alternativeName>
        <fullName evidence="14">Glucose transporter type 4, insulin-responsive</fullName>
        <shortName evidence="14">GLUT-4</shortName>
    </alternativeName>
</protein>
<comment type="function">
    <text evidence="9 11">Insulin-regulated facilitative glucose transporter, which plays a key role in removal of glucose from circulation (PubMed:26240143, PubMed:26629404). Response to insulin is regulated by its intracellular localization: in the absence of insulin, it is efficiently retained intracellularly within storage compartments in muscle and fat cells (PubMed:26240143, PubMed:26629404). Upon insulin stimulation, translocates from these compartments to the cell surface where it transports glucose from the extracellular milieu into the cell (PubMed:26240143, PubMed:26629404).</text>
</comment>
<comment type="catalytic activity">
    <reaction evidence="3">
        <text>D-glucose(out) = D-glucose(in)</text>
        <dbReference type="Rhea" id="RHEA:60376"/>
        <dbReference type="ChEBI" id="CHEBI:4167"/>
    </reaction>
</comment>
<comment type="subunit">
    <text evidence="2 3 11">Binds to DAXX (By similarity). Interacts via its N-terminus with SRFBP1 (By similarity). Interacts with NDUFA9 (By similarity). Interacts with TRARG1; the interaction is required for proper SLC2A4 recycling after insulin stimulation (PubMed:26629404).</text>
</comment>
<comment type="interaction">
    <interactant intactId="EBI-7540210">
        <id>P14142</id>
    </interactant>
    <interactant intactId="EBI-8398881">
        <id>Q3U7R1</id>
        <label>Esyt1</label>
    </interactant>
    <organismsDiffer>false</organismsDiffer>
    <experiments>2</experiments>
</comment>
<comment type="subcellular location">
    <subcellularLocation>
        <location evidence="7 8 9 11 13">Cell membrane</location>
        <topology evidence="7">Multi-pass membrane protein</topology>
    </subcellularLocation>
    <subcellularLocation>
        <location evidence="9 11">Endomembrane system</location>
        <topology evidence="16">Multi-pass membrane protein</topology>
    </subcellularLocation>
    <subcellularLocation>
        <location evidence="9 11 12">Cytoplasm</location>
        <location evidence="9 11 12">Perinuclear region</location>
    </subcellularLocation>
    <text evidence="9 11 12 13">Localizes primarily to the perinuclear region, undergoing continued recycling to the plasma membrane where it is rapidly reinternalized (PubMed:26240143, PubMed:26629404, PubMed:27354378). The dileucine internalization motif is critical for intracellular sequestration (PubMed:26240143, PubMed:26629404). Insulin stimulation induces translocation to the cell membrane (PubMed:27739494).</text>
</comment>
<comment type="tissue specificity">
    <text evidence="9 10">Expressed in skeletal and cardiac muscles (PubMed:26240143, PubMed:2654938). Expressed in brown and white adipose tissues (PubMed:26240143, PubMed:2654938).</text>
</comment>
<comment type="domain">
    <text evidence="2">The dileucine internalization motif is critical for intracellular sequestration.</text>
</comment>
<comment type="PTM">
    <text evidence="2">Sumoylated.</text>
</comment>
<comment type="PTM">
    <text evidence="2">Palmitoylated. Palmitoylation by ZDHHC7 controls the insulin-dependent translocation of GLUT4 to the plasma membrane.</text>
</comment>
<comment type="disease">
    <text>Defects in Slc2a4 may be the cause of certain post-receptor defects in non-insulin-dependent diabetes mellitus (NIDDM).</text>
</comment>
<comment type="miscellaneous">
    <text evidence="5">Insulin-stimulated phosphorylation of TBC1D4 is required for GLUT4 translocation.</text>
</comment>
<comment type="similarity">
    <text evidence="16">Belongs to the major facilitator superfamily. Sugar transporter (TC 2.A.1.1) family. Glucose transporter subfamily.</text>
</comment>
<accession>P14142</accession>
<accession>Q3TPK6</accession>
<accession>Q9JJN9</accession>
<dbReference type="EMBL" id="M23383">
    <property type="protein sequence ID" value="AAA37753.1"/>
    <property type="molecule type" value="mRNA"/>
</dbReference>
<dbReference type="EMBL" id="AB008453">
    <property type="protein sequence ID" value="BAB03251.1"/>
    <property type="molecule type" value="mRNA"/>
</dbReference>
<dbReference type="EMBL" id="AY902342">
    <property type="protein sequence ID" value="AAX90627.1"/>
    <property type="molecule type" value="Genomic_DNA"/>
</dbReference>
<dbReference type="EMBL" id="AK137607">
    <property type="protein sequence ID" value="BAE23429.1"/>
    <property type="molecule type" value="mRNA"/>
</dbReference>
<dbReference type="EMBL" id="AK164310">
    <property type="protein sequence ID" value="BAE37730.1"/>
    <property type="molecule type" value="mRNA"/>
</dbReference>
<dbReference type="EMBL" id="AL596185">
    <property type="status" value="NOT_ANNOTATED_CDS"/>
    <property type="molecule type" value="Genomic_DNA"/>
</dbReference>
<dbReference type="EMBL" id="CH466596">
    <property type="protein sequence ID" value="EDL12494.1"/>
    <property type="molecule type" value="Genomic_DNA"/>
</dbReference>
<dbReference type="EMBL" id="CH466596">
    <property type="protein sequence ID" value="EDL12496.1"/>
    <property type="molecule type" value="Genomic_DNA"/>
</dbReference>
<dbReference type="EMBL" id="BC014282">
    <property type="protein sequence ID" value="AAH14282.1"/>
    <property type="molecule type" value="mRNA"/>
</dbReference>
<dbReference type="CCDS" id="CCDS36201.1"/>
<dbReference type="PIR" id="B30310">
    <property type="entry name" value="B30310"/>
</dbReference>
<dbReference type="RefSeq" id="NP_033230.2">
    <property type="nucleotide sequence ID" value="NM_009204.3"/>
</dbReference>
<dbReference type="SMR" id="P14142"/>
<dbReference type="BioGRID" id="203307">
    <property type="interactions" value="7"/>
</dbReference>
<dbReference type="DIP" id="DIP-42440N"/>
<dbReference type="ELM" id="P14142"/>
<dbReference type="FunCoup" id="P14142">
    <property type="interactions" value="606"/>
</dbReference>
<dbReference type="IntAct" id="P14142">
    <property type="interactions" value="2"/>
</dbReference>
<dbReference type="MINT" id="P14142"/>
<dbReference type="STRING" id="10090.ENSMUSP00000018710"/>
<dbReference type="ChEMBL" id="CHEMBL1250410"/>
<dbReference type="DrugCentral" id="P14142"/>
<dbReference type="GlyCosmos" id="P14142">
    <property type="glycosylation" value="1 site, No reported glycans"/>
</dbReference>
<dbReference type="GlyGen" id="P14142">
    <property type="glycosylation" value="2 sites, 1 O-linked glycan (1 site)"/>
</dbReference>
<dbReference type="iPTMnet" id="P14142"/>
<dbReference type="PhosphoSitePlus" id="P14142"/>
<dbReference type="SwissPalm" id="P14142"/>
<dbReference type="jPOST" id="P14142"/>
<dbReference type="PaxDb" id="10090-ENSMUSP00000018710"/>
<dbReference type="PeptideAtlas" id="P14142"/>
<dbReference type="ProteomicsDB" id="271349"/>
<dbReference type="Antibodypedia" id="4297">
    <property type="antibodies" value="803 antibodies from 45 providers"/>
</dbReference>
<dbReference type="DNASU" id="20528"/>
<dbReference type="Ensembl" id="ENSMUST00000018710.13">
    <property type="protein sequence ID" value="ENSMUSP00000018710.7"/>
    <property type="gene ID" value="ENSMUSG00000018566.15"/>
</dbReference>
<dbReference type="GeneID" id="20528"/>
<dbReference type="KEGG" id="mmu:20528"/>
<dbReference type="UCSC" id="uc007jsy.1">
    <property type="organism name" value="mouse"/>
</dbReference>
<dbReference type="AGR" id="MGI:95758"/>
<dbReference type="CTD" id="6517"/>
<dbReference type="MGI" id="MGI:95758">
    <property type="gene designation" value="Slc2a4"/>
</dbReference>
<dbReference type="VEuPathDB" id="HostDB:ENSMUSG00000018566"/>
<dbReference type="eggNOG" id="KOG0569">
    <property type="taxonomic scope" value="Eukaryota"/>
</dbReference>
<dbReference type="GeneTree" id="ENSGT00940000160688"/>
<dbReference type="HOGENOM" id="CLU_001265_30_5_1"/>
<dbReference type="InParanoid" id="P14142"/>
<dbReference type="OMA" id="VAQFLCM"/>
<dbReference type="OrthoDB" id="4540492at2759"/>
<dbReference type="PhylomeDB" id="P14142"/>
<dbReference type="TreeFam" id="TF313762"/>
<dbReference type="Reactome" id="R-MMU-189200">
    <property type="pathway name" value="Cellular hexose transport"/>
</dbReference>
<dbReference type="BioGRID-ORCS" id="20528">
    <property type="hits" value="2 hits in 76 CRISPR screens"/>
</dbReference>
<dbReference type="PRO" id="PR:P14142"/>
<dbReference type="Proteomes" id="UP000000589">
    <property type="component" value="Chromosome 11"/>
</dbReference>
<dbReference type="RNAct" id="P14142">
    <property type="molecule type" value="protein"/>
</dbReference>
<dbReference type="Bgee" id="ENSMUSG00000018566">
    <property type="expression patterns" value="Expressed in hindlimb stylopod muscle and 184 other cell types or tissues"/>
</dbReference>
<dbReference type="ExpressionAtlas" id="P14142">
    <property type="expression patterns" value="baseline and differential"/>
</dbReference>
<dbReference type="GO" id="GO:0005905">
    <property type="term" value="C:clathrin-coated pit"/>
    <property type="evidence" value="ECO:0007669"/>
    <property type="project" value="Ensembl"/>
</dbReference>
<dbReference type="GO" id="GO:0030659">
    <property type="term" value="C:cytoplasmic vesicle membrane"/>
    <property type="evidence" value="ECO:0000314"/>
    <property type="project" value="UniProtKB"/>
</dbReference>
<dbReference type="GO" id="GO:0005829">
    <property type="term" value="C:cytosol"/>
    <property type="evidence" value="ECO:0000314"/>
    <property type="project" value="MGI"/>
</dbReference>
<dbReference type="GO" id="GO:0012505">
    <property type="term" value="C:endomembrane system"/>
    <property type="evidence" value="ECO:0000314"/>
    <property type="project" value="UniProtKB"/>
</dbReference>
<dbReference type="GO" id="GO:0005768">
    <property type="term" value="C:endosome"/>
    <property type="evidence" value="ECO:0000314"/>
    <property type="project" value="MGI"/>
</dbReference>
<dbReference type="GO" id="GO:0009897">
    <property type="term" value="C:external side of plasma membrane"/>
    <property type="evidence" value="ECO:0000266"/>
    <property type="project" value="MGI"/>
</dbReference>
<dbReference type="GO" id="GO:0070062">
    <property type="term" value="C:extracellular exosome"/>
    <property type="evidence" value="ECO:0000314"/>
    <property type="project" value="MGI"/>
</dbReference>
<dbReference type="GO" id="GO:0032593">
    <property type="term" value="C:insulin-responsive compartment"/>
    <property type="evidence" value="ECO:0000314"/>
    <property type="project" value="UniProtKB"/>
</dbReference>
<dbReference type="GO" id="GO:0016020">
    <property type="term" value="C:membrane"/>
    <property type="evidence" value="ECO:0000314"/>
    <property type="project" value="MGI"/>
</dbReference>
<dbReference type="GO" id="GO:0045121">
    <property type="term" value="C:membrane raft"/>
    <property type="evidence" value="ECO:0000314"/>
    <property type="project" value="MGI"/>
</dbReference>
<dbReference type="GO" id="GO:0005771">
    <property type="term" value="C:multivesicular body"/>
    <property type="evidence" value="ECO:0007669"/>
    <property type="project" value="Ensembl"/>
</dbReference>
<dbReference type="GO" id="GO:0048471">
    <property type="term" value="C:perinuclear region of cytoplasm"/>
    <property type="evidence" value="ECO:0000314"/>
    <property type="project" value="UniProtKB"/>
</dbReference>
<dbReference type="GO" id="GO:0005886">
    <property type="term" value="C:plasma membrane"/>
    <property type="evidence" value="ECO:0000314"/>
    <property type="project" value="UniProtKB"/>
</dbReference>
<dbReference type="GO" id="GO:0098793">
    <property type="term" value="C:presynapse"/>
    <property type="evidence" value="ECO:0007669"/>
    <property type="project" value="Ensembl"/>
</dbReference>
<dbReference type="GO" id="GO:0042383">
    <property type="term" value="C:sarcolemma"/>
    <property type="evidence" value="ECO:0000314"/>
    <property type="project" value="MGI"/>
</dbReference>
<dbReference type="GO" id="GO:0016529">
    <property type="term" value="C:sarcoplasmic reticulum"/>
    <property type="evidence" value="ECO:0007669"/>
    <property type="project" value="Ensembl"/>
</dbReference>
<dbReference type="GO" id="GO:0030315">
    <property type="term" value="C:T-tubule"/>
    <property type="evidence" value="ECO:0007669"/>
    <property type="project" value="Ensembl"/>
</dbReference>
<dbReference type="GO" id="GO:0005802">
    <property type="term" value="C:trans-Golgi network"/>
    <property type="evidence" value="ECO:0007669"/>
    <property type="project" value="Ensembl"/>
</dbReference>
<dbReference type="GO" id="GO:0030140">
    <property type="term" value="C:trans-Golgi network transport vesicle"/>
    <property type="evidence" value="ECO:0000314"/>
    <property type="project" value="MGI"/>
</dbReference>
<dbReference type="GO" id="GO:0012506">
    <property type="term" value="C:vesicle membrane"/>
    <property type="evidence" value="ECO:0000266"/>
    <property type="project" value="MGI"/>
</dbReference>
<dbReference type="GO" id="GO:0055056">
    <property type="term" value="F:D-glucose transmembrane transporter activity"/>
    <property type="evidence" value="ECO:0000314"/>
    <property type="project" value="MGI"/>
</dbReference>
<dbReference type="GO" id="GO:0015304">
    <property type="term" value="F:D-glucose uniporter activity"/>
    <property type="evidence" value="ECO:0000250"/>
    <property type="project" value="UniProtKB"/>
</dbReference>
<dbReference type="GO" id="GO:0005360">
    <property type="term" value="F:insulin-responsive D-glucose:proton symporter activity"/>
    <property type="evidence" value="ECO:0000304"/>
    <property type="project" value="MGI"/>
</dbReference>
<dbReference type="GO" id="GO:0010021">
    <property type="term" value="P:amylopectin biosynthetic process"/>
    <property type="evidence" value="ECO:0000314"/>
    <property type="project" value="MGI"/>
</dbReference>
<dbReference type="GO" id="GO:0050873">
    <property type="term" value="P:brown fat cell differentiation"/>
    <property type="evidence" value="ECO:0000314"/>
    <property type="project" value="MGI"/>
</dbReference>
<dbReference type="GO" id="GO:0071456">
    <property type="term" value="P:cellular response to hypoxia"/>
    <property type="evidence" value="ECO:0007669"/>
    <property type="project" value="Ensembl"/>
</dbReference>
<dbReference type="GO" id="GO:0032869">
    <property type="term" value="P:cellular response to insulin stimulus"/>
    <property type="evidence" value="ECO:0000314"/>
    <property type="project" value="UniProtKB"/>
</dbReference>
<dbReference type="GO" id="GO:0071470">
    <property type="term" value="P:cellular response to osmotic stress"/>
    <property type="evidence" value="ECO:0000314"/>
    <property type="project" value="MGI"/>
</dbReference>
<dbReference type="GO" id="GO:0071356">
    <property type="term" value="P:cellular response to tumor necrosis factor"/>
    <property type="evidence" value="ECO:0000314"/>
    <property type="project" value="MGI"/>
</dbReference>
<dbReference type="GO" id="GO:1904659">
    <property type="term" value="P:D-glucose transmembrane transport"/>
    <property type="evidence" value="ECO:0000314"/>
    <property type="project" value="MGI"/>
</dbReference>
<dbReference type="GO" id="GO:0042593">
    <property type="term" value="P:glucose homeostasis"/>
    <property type="evidence" value="ECO:0000266"/>
    <property type="project" value="MGI"/>
</dbReference>
<dbReference type="GO" id="GO:0044381">
    <property type="term" value="P:glucose import in response to insulin stimulus"/>
    <property type="evidence" value="ECO:0000314"/>
    <property type="project" value="UniProtKB"/>
</dbReference>
<dbReference type="GO" id="GO:0007616">
    <property type="term" value="P:long-term memory"/>
    <property type="evidence" value="ECO:0007669"/>
    <property type="project" value="Ensembl"/>
</dbReference>
<dbReference type="GO" id="GO:0031550">
    <property type="term" value="P:positive regulation of brain-derived neurotrophic factor receptor signaling pathway"/>
    <property type="evidence" value="ECO:0007669"/>
    <property type="project" value="Ensembl"/>
</dbReference>
<dbReference type="GO" id="GO:0098694">
    <property type="term" value="P:regulation of synaptic vesicle budding from presynaptic endocytic zone membrane"/>
    <property type="evidence" value="ECO:0007669"/>
    <property type="project" value="Ensembl"/>
</dbReference>
<dbReference type="GO" id="GO:0045471">
    <property type="term" value="P:response to ethanol"/>
    <property type="evidence" value="ECO:0007669"/>
    <property type="project" value="Ensembl"/>
</dbReference>
<dbReference type="GO" id="GO:0007614">
    <property type="term" value="P:short-term memory"/>
    <property type="evidence" value="ECO:0007669"/>
    <property type="project" value="Ensembl"/>
</dbReference>
<dbReference type="CDD" id="cd17431">
    <property type="entry name" value="MFS_GLUT_Class1"/>
    <property type="match status" value="1"/>
</dbReference>
<dbReference type="FunFam" id="1.20.1250.20:FF:000029">
    <property type="entry name" value="solute carrier family 2, facilitated glucose transporter member 4"/>
    <property type="match status" value="1"/>
</dbReference>
<dbReference type="Gene3D" id="1.20.1250.20">
    <property type="entry name" value="MFS general substrate transporter like domains"/>
    <property type="match status" value="1"/>
</dbReference>
<dbReference type="InterPro" id="IPR002441">
    <property type="entry name" value="Glc_transpt_4"/>
</dbReference>
<dbReference type="InterPro" id="IPR045263">
    <property type="entry name" value="GLUT"/>
</dbReference>
<dbReference type="InterPro" id="IPR020846">
    <property type="entry name" value="MFS_dom"/>
</dbReference>
<dbReference type="InterPro" id="IPR005828">
    <property type="entry name" value="MFS_sugar_transport-like"/>
</dbReference>
<dbReference type="InterPro" id="IPR036259">
    <property type="entry name" value="MFS_trans_sf"/>
</dbReference>
<dbReference type="InterPro" id="IPR003663">
    <property type="entry name" value="Sugar/inositol_transpt"/>
</dbReference>
<dbReference type="InterPro" id="IPR005829">
    <property type="entry name" value="Sugar_transporter_CS"/>
</dbReference>
<dbReference type="NCBIfam" id="TIGR00879">
    <property type="entry name" value="SP"/>
    <property type="match status" value="1"/>
</dbReference>
<dbReference type="PANTHER" id="PTHR23503">
    <property type="entry name" value="SOLUTE CARRIER FAMILY 2"/>
    <property type="match status" value="1"/>
</dbReference>
<dbReference type="PANTHER" id="PTHR23503:SF120">
    <property type="entry name" value="SOLUTE CARRIER FAMILY 2, FACILITATED GLUCOSE TRANSPORTER MEMBER 4"/>
    <property type="match status" value="1"/>
</dbReference>
<dbReference type="Pfam" id="PF00083">
    <property type="entry name" value="Sugar_tr"/>
    <property type="match status" value="1"/>
</dbReference>
<dbReference type="PRINTS" id="PR01193">
    <property type="entry name" value="GLUCTRSPORT4"/>
</dbReference>
<dbReference type="PRINTS" id="PR00171">
    <property type="entry name" value="SUGRTRNSPORT"/>
</dbReference>
<dbReference type="SUPFAM" id="SSF103473">
    <property type="entry name" value="MFS general substrate transporter"/>
    <property type="match status" value="1"/>
</dbReference>
<dbReference type="PROSITE" id="PS50850">
    <property type="entry name" value="MFS"/>
    <property type="match status" value="1"/>
</dbReference>
<dbReference type="PROSITE" id="PS00216">
    <property type="entry name" value="SUGAR_TRANSPORT_1"/>
    <property type="match status" value="1"/>
</dbReference>
<dbReference type="PROSITE" id="PS00217">
    <property type="entry name" value="SUGAR_TRANSPORT_2"/>
    <property type="match status" value="1"/>
</dbReference>
<evidence type="ECO:0000250" key="1">
    <source>
        <dbReference type="UniProtKB" id="P11169"/>
    </source>
</evidence>
<evidence type="ECO:0000250" key="2">
    <source>
        <dbReference type="UniProtKB" id="P14672"/>
    </source>
</evidence>
<evidence type="ECO:0000250" key="3">
    <source>
        <dbReference type="UniProtKB" id="P19357"/>
    </source>
</evidence>
<evidence type="ECO:0000255" key="4"/>
<evidence type="ECO:0000269" key="5">
    <source>
    </source>
</evidence>
<evidence type="ECO:0000269" key="6">
    <source>
    </source>
</evidence>
<evidence type="ECO:0000269" key="7">
    <source>
    </source>
</evidence>
<evidence type="ECO:0000269" key="8">
    <source>
    </source>
</evidence>
<evidence type="ECO:0000269" key="9">
    <source>
    </source>
</evidence>
<evidence type="ECO:0000269" key="10">
    <source>
    </source>
</evidence>
<evidence type="ECO:0000269" key="11">
    <source>
    </source>
</evidence>
<evidence type="ECO:0000269" key="12">
    <source>
    </source>
</evidence>
<evidence type="ECO:0000269" key="13">
    <source>
    </source>
</evidence>
<evidence type="ECO:0000303" key="14">
    <source>
    </source>
</evidence>
<evidence type="ECO:0000303" key="15">
    <source>
    </source>
</evidence>
<evidence type="ECO:0000305" key="16"/>
<evidence type="ECO:0000312" key="17">
    <source>
        <dbReference type="MGI" id="MGI:95758"/>
    </source>
</evidence>
<evidence type="ECO:0007744" key="18">
    <source>
    </source>
</evidence>
<feature type="chain" id="PRO_0000050364" description="Solute carrier family 2, facilitated glucose transporter member 4">
    <location>
        <begin position="1"/>
        <end position="509"/>
    </location>
</feature>
<feature type="topological domain" description="Cytoplasmic" evidence="4">
    <location>
        <begin position="1"/>
        <end position="23"/>
    </location>
</feature>
<feature type="transmembrane region" description="Helical; Name=1" evidence="4">
    <location>
        <begin position="24"/>
        <end position="44"/>
    </location>
</feature>
<feature type="topological domain" description="Extracellular" evidence="4">
    <location>
        <begin position="45"/>
        <end position="80"/>
    </location>
</feature>
<feature type="transmembrane region" description="Helical; Name=2" evidence="4">
    <location>
        <begin position="81"/>
        <end position="101"/>
    </location>
</feature>
<feature type="topological domain" description="Cytoplasmic" evidence="4">
    <location>
        <begin position="102"/>
        <end position="110"/>
    </location>
</feature>
<feature type="transmembrane region" description="Helical; Name=3" evidence="4">
    <location>
        <begin position="111"/>
        <end position="131"/>
    </location>
</feature>
<feature type="topological domain" description="Extracellular" evidence="4">
    <location>
        <begin position="132"/>
        <end position="141"/>
    </location>
</feature>
<feature type="transmembrane region" description="Helical; Name=4" evidence="4">
    <location>
        <begin position="142"/>
        <end position="162"/>
    </location>
</feature>
<feature type="topological domain" description="Cytoplasmic" evidence="4">
    <location>
        <begin position="163"/>
        <end position="170"/>
    </location>
</feature>
<feature type="transmembrane region" description="Helical; Name=5" evidence="4">
    <location>
        <begin position="171"/>
        <end position="191"/>
    </location>
</feature>
<feature type="topological domain" description="Extracellular" evidence="4">
    <location>
        <begin position="192"/>
        <end position="200"/>
    </location>
</feature>
<feature type="transmembrane region" description="Helical; Name=6" evidence="4">
    <location>
        <begin position="201"/>
        <end position="221"/>
    </location>
</feature>
<feature type="topological domain" description="Cytoplasmic" evidence="4">
    <location>
        <begin position="222"/>
        <end position="286"/>
    </location>
</feature>
<feature type="transmembrane region" description="Helical; Name=7" evidence="4">
    <location>
        <begin position="287"/>
        <end position="307"/>
    </location>
</feature>
<feature type="topological domain" description="Extracellular" evidence="4">
    <location>
        <begin position="308"/>
        <end position="322"/>
    </location>
</feature>
<feature type="transmembrane region" description="Helical; Name=8" evidence="4">
    <location>
        <begin position="323"/>
        <end position="343"/>
    </location>
</feature>
<feature type="topological domain" description="Cytoplasmic" evidence="4">
    <location>
        <begin position="344"/>
        <end position="352"/>
    </location>
</feature>
<feature type="transmembrane region" description="Helical; Name=9" evidence="4">
    <location>
        <begin position="353"/>
        <end position="373"/>
    </location>
</feature>
<feature type="topological domain" description="Extracellular" evidence="4">
    <location>
        <begin position="374"/>
        <end position="384"/>
    </location>
</feature>
<feature type="transmembrane region" description="Helical; Name=10" evidence="4">
    <location>
        <begin position="385"/>
        <end position="405"/>
    </location>
</feature>
<feature type="topological domain" description="Cytoplasmic" evidence="4">
    <location>
        <begin position="406"/>
        <end position="416"/>
    </location>
</feature>
<feature type="transmembrane region" description="Helical; Name=11" evidence="4">
    <location>
        <begin position="417"/>
        <end position="437"/>
    </location>
</feature>
<feature type="topological domain" description="Extracellular" evidence="4">
    <location>
        <begin position="438"/>
        <end position="444"/>
    </location>
</feature>
<feature type="transmembrane region" description="Helical; Name=12" evidence="4">
    <location>
        <begin position="445"/>
        <end position="465"/>
    </location>
</feature>
<feature type="topological domain" description="Cytoplasmic" evidence="4">
    <location>
        <begin position="466"/>
        <end position="508"/>
    </location>
</feature>
<feature type="region of interest" description="Interaction with SRFBP1" evidence="2">
    <location>
        <begin position="7"/>
        <end position="13"/>
    </location>
</feature>
<feature type="short sequence motif" description="Dileucine internalization motif" evidence="4">
    <location>
        <begin position="489"/>
        <end position="490"/>
    </location>
</feature>
<feature type="binding site" evidence="1">
    <location>
        <position position="177"/>
    </location>
    <ligand>
        <name>D-glucose</name>
        <dbReference type="ChEBI" id="CHEBI:4167"/>
    </ligand>
</feature>
<feature type="binding site" evidence="1">
    <location>
        <begin position="298"/>
        <end position="299"/>
    </location>
    <ligand>
        <name>D-glucose</name>
        <dbReference type="ChEBI" id="CHEBI:4167"/>
    </ligand>
</feature>
<feature type="binding site" evidence="1">
    <location>
        <position position="304"/>
    </location>
    <ligand>
        <name>D-glucose</name>
        <dbReference type="ChEBI" id="CHEBI:4167"/>
    </ligand>
</feature>
<feature type="binding site" evidence="1">
    <location>
        <position position="333"/>
    </location>
    <ligand>
        <name>D-glucose</name>
        <dbReference type="ChEBI" id="CHEBI:4167"/>
    </ligand>
</feature>
<feature type="binding site" evidence="1">
    <location>
        <position position="396"/>
    </location>
    <ligand>
        <name>D-glucose</name>
        <dbReference type="ChEBI" id="CHEBI:4167"/>
    </ligand>
</feature>
<feature type="binding site" evidence="1">
    <location>
        <position position="404"/>
    </location>
    <ligand>
        <name>D-glucose</name>
        <dbReference type="ChEBI" id="CHEBI:4167"/>
    </ligand>
</feature>
<feature type="modified residue" description="Phosphoserine" evidence="3">
    <location>
        <position position="10"/>
    </location>
</feature>
<feature type="modified residue" description="Phosphoserine; by SGK1" evidence="2">
    <location>
        <position position="274"/>
    </location>
</feature>
<feature type="modified residue" description="Phosphothreonine" evidence="18">
    <location>
        <position position="486"/>
    </location>
</feature>
<feature type="modified residue" description="Phosphoserine" evidence="18">
    <location>
        <position position="488"/>
    </location>
</feature>
<feature type="lipid moiety-binding region" description="S-palmitoyl cysteine" evidence="2">
    <location>
        <position position="223"/>
    </location>
</feature>
<feature type="glycosylation site" description="N-linked (GlcNAc...) asparagine" evidence="6">
    <location>
        <position position="57"/>
    </location>
</feature>
<feature type="sequence conflict" description="In Ref. 1; AAA37753." evidence="16" ref="1">
    <original>D</original>
    <variation>DVK</variation>
    <location>
        <position position="11"/>
    </location>
</feature>
<feature type="sequence conflict" description="In Ref. 1; AAA37753." evidence="16" ref="1">
    <original>A</original>
    <variation>V</variation>
    <location>
        <position position="132"/>
    </location>
</feature>
<feature type="sequence conflict" description="In Ref. 1; AAA37753." evidence="16" ref="1">
    <original>Q</original>
    <variation>R</variation>
    <location>
        <position position="177"/>
    </location>
</feature>
<feature type="sequence conflict" description="In Ref. 1; AAA37753." evidence="16" ref="1">
    <original>R</original>
    <variation>P</variation>
    <location>
        <position position="246"/>
    </location>
</feature>
<feature type="sequence conflict" description="In Ref. 1; AAA37753." evidence="16" ref="1">
    <location>
        <position position="406"/>
    </location>
</feature>
<feature type="sequence conflict" description="In Ref. 1; AAA37753." evidence="16" ref="1">
    <original>A</original>
    <variation>R</variation>
    <location>
        <position position="444"/>
    </location>
</feature>
<proteinExistence type="evidence at protein level"/>
<sequence>MPSGFQQIGSDDGEPPRQRVTGTLVLAVFSAVLGSLQFGYNIGVINAPQKVIEQSYNATWLGRQGPGGPDSIPQGTLTTLWALSVAIFSVGGMISSFLIGIISQWLGRKRAMLANNVLAVLGGALMGLANAAASYEILILGRFLIGAYSGLTSGLVPMYVGEIAPTHLRGALGTLNQLAIVIGILVAQVLGLESMLGTATLWPLLLALTVLPALLQLILLPFCPESPRYLYIIRNLEGPARKSLKRLTGWADVSDALAELKDEKRKLERERPMSLLQLLGSRTHRQPLIIAVVLQLSQQLSGINAVFYYSTSIFESAGVGQPAYATIGAGVVNTVFTLVSVLLVERAGRRTLHLLGLAGMCGCAILMTVALLLLERVPAMSYVSIVAIFGFVAFFEIGPGPIPWFIVAELFSQGPRPAAMAVAGFSNWTCNFIVGMGFQYVADAMGPYVFLLFAVLLLGFFIFTFLKVPETRGRTFDQISAAFRRTPSLLEQEVKPSTELEYLGPDEND</sequence>
<gene>
    <name evidence="17" type="primary">Slc2a4</name>
    <name evidence="14" type="synonym">Glut4</name>
</gene>